<sequence length="501" mass="57772">MVLWGPVLGVLLVAIVGYLCLQGLLRQRRPEEPPLDKGSVPWLGHAMTFRKNMLEFLKHMWARHGDIFTVQLGGQYFTFVMDPLSFGPILKDAKRKLDFVEYAEKLVLKVFGYRSMQGDHRMIHSASTKHLMGDGLEELNKAMLDNLSLVMLGPKGPSPDASCWREDGLFHFCYDILFKAGYLSLFGRTEDKEQDLLQAEELFMQFRKFDRMFPRFVYSLLGPREWLEVGRLQCLFHKMLSVEHSLERHGISSWITDMLQVLREQGVAPAMQDKFNFMMLWASQGNTGPTTFWALLFLLKHPEAMRAVREEATRVLGEARLEDKQSFDVEVSALNHMPVLDSVMEETLRLGAAPTLLRVVNSDQILKMASGQEYRLRHGDILALFPYLSVHMDPDIHPEPTTFKYDRFLTPSGSRKVNFYKAGKKIHHYTMPWGSGISICPGRFFALTEMKLFVLLMVTHFDLELVDPDTPVPPVDPQRWGFGTMQPSYEVRFRYRLRPTE</sequence>
<name>CP8B1_PIG</name>
<organism>
    <name type="scientific">Sus scrofa</name>
    <name type="common">Pig</name>
    <dbReference type="NCBI Taxonomy" id="9823"/>
    <lineage>
        <taxon>Eukaryota</taxon>
        <taxon>Metazoa</taxon>
        <taxon>Chordata</taxon>
        <taxon>Craniata</taxon>
        <taxon>Vertebrata</taxon>
        <taxon>Euteleostomi</taxon>
        <taxon>Mammalia</taxon>
        <taxon>Eutheria</taxon>
        <taxon>Laurasiatheria</taxon>
        <taxon>Artiodactyla</taxon>
        <taxon>Suina</taxon>
        <taxon>Suidae</taxon>
        <taxon>Sus</taxon>
    </lineage>
</organism>
<evidence type="ECO:0000250" key="1"/>
<evidence type="ECO:0000250" key="2">
    <source>
        <dbReference type="UniProtKB" id="O02766"/>
    </source>
</evidence>
<evidence type="ECO:0000250" key="3">
    <source>
        <dbReference type="UniProtKB" id="O88962"/>
    </source>
</evidence>
<evidence type="ECO:0000250" key="4">
    <source>
        <dbReference type="UniProtKB" id="Q9UNU6"/>
    </source>
</evidence>
<evidence type="ECO:0000255" key="5"/>
<evidence type="ECO:0000269" key="6">
    <source>
    </source>
</evidence>
<evidence type="ECO:0000305" key="7"/>
<evidence type="ECO:0000305" key="8">
    <source>
    </source>
</evidence>
<keyword id="KW-0256">Endoplasmic reticulum</keyword>
<keyword id="KW-0349">Heme</keyword>
<keyword id="KW-0408">Iron</keyword>
<keyword id="KW-0444">Lipid biosynthesis</keyword>
<keyword id="KW-0443">Lipid metabolism</keyword>
<keyword id="KW-0472">Membrane</keyword>
<keyword id="KW-0479">Metal-binding</keyword>
<keyword id="KW-0492">Microsome</keyword>
<keyword id="KW-0503">Monooxygenase</keyword>
<keyword id="KW-0560">Oxidoreductase</keyword>
<keyword id="KW-0597">Phosphoprotein</keyword>
<keyword id="KW-1185">Reference proteome</keyword>
<keyword id="KW-0752">Steroid biosynthesis</keyword>
<keyword id="KW-0812">Transmembrane</keyword>
<keyword id="KW-1133">Transmembrane helix</keyword>
<accession>Q7YRB2</accession>
<comment type="function">
    <text evidence="2 3 6">A cytochrome P450 monooxygenase involved in primary bile acid biosynthesis. Catalyzes the 12alpha-hydroxylation of 7alpha-hydroxy-4-cholesten-3-one, an intermediate metabolite in cholic acid biosynthesis (PubMed:14643796). Controls biliary balance of cholic acid and chenodeoxycholic acid, ultimately regulating the intestinal absorption of dietary lipids (By similarity). Mechanistically, uses molecular oxygen inserting one oxygen atom into a substrate, and reducing the second into a water molecule, with two electrons provided by NADPH via cytochrome P450 reductase (CPR; NADPH--hemoprotein reductase) (By similarity).</text>
</comment>
<comment type="catalytic activity">
    <reaction evidence="6">
        <text>7alpha-hydroxycholest-4-en-3-one + reduced [NADPH--hemoprotein reductase] + O2 = 7alpha,12alpha-dihydroxycholest-4-en-3-one + oxidized [NADPH--hemoprotein reductase] + H2O + H(+)</text>
        <dbReference type="Rhea" id="RHEA:46752"/>
        <dbReference type="Rhea" id="RHEA-COMP:11964"/>
        <dbReference type="Rhea" id="RHEA-COMP:11965"/>
        <dbReference type="ChEBI" id="CHEBI:15377"/>
        <dbReference type="ChEBI" id="CHEBI:15378"/>
        <dbReference type="ChEBI" id="CHEBI:15379"/>
        <dbReference type="ChEBI" id="CHEBI:17899"/>
        <dbReference type="ChEBI" id="CHEBI:28477"/>
        <dbReference type="ChEBI" id="CHEBI:57618"/>
        <dbReference type="ChEBI" id="CHEBI:58210"/>
        <dbReference type="EC" id="1.14.14.139"/>
    </reaction>
    <physiologicalReaction direction="left-to-right" evidence="8">
        <dbReference type="Rhea" id="RHEA:46753"/>
    </physiologicalReaction>
</comment>
<comment type="catalytic activity">
    <reaction evidence="6">
        <text>5beta-cholestane-3alpha,7alpha-diol + reduced [NADPH--hemoprotein reductase] + O2 = 5beta-cholestane-3alpha,7alpha,12alpha-triol + oxidized [NADPH--hemoprotein reductase] + H2O + H(+)</text>
        <dbReference type="Rhea" id="RHEA:15261"/>
        <dbReference type="Rhea" id="RHEA-COMP:11964"/>
        <dbReference type="Rhea" id="RHEA-COMP:11965"/>
        <dbReference type="ChEBI" id="CHEBI:15377"/>
        <dbReference type="ChEBI" id="CHEBI:15378"/>
        <dbReference type="ChEBI" id="CHEBI:15379"/>
        <dbReference type="ChEBI" id="CHEBI:16496"/>
        <dbReference type="ChEBI" id="CHEBI:28047"/>
        <dbReference type="ChEBI" id="CHEBI:57618"/>
        <dbReference type="ChEBI" id="CHEBI:58210"/>
        <dbReference type="EC" id="1.14.14.139"/>
    </reaction>
    <physiologicalReaction direction="left-to-right" evidence="8">
        <dbReference type="Rhea" id="RHEA:15262"/>
    </physiologicalReaction>
</comment>
<comment type="catalytic activity">
    <reaction evidence="6">
        <text>chenodeoxycholate + reduced [NADPH--hemoprotein reductase] + O2 = cholate + oxidized [NADPH--hemoprotein reductase] + H2O + H(+)</text>
        <dbReference type="Rhea" id="RHEA:65700"/>
        <dbReference type="Rhea" id="RHEA-COMP:11964"/>
        <dbReference type="Rhea" id="RHEA-COMP:11965"/>
        <dbReference type="ChEBI" id="CHEBI:15377"/>
        <dbReference type="ChEBI" id="CHEBI:15378"/>
        <dbReference type="ChEBI" id="CHEBI:15379"/>
        <dbReference type="ChEBI" id="CHEBI:29747"/>
        <dbReference type="ChEBI" id="CHEBI:36234"/>
        <dbReference type="ChEBI" id="CHEBI:57618"/>
        <dbReference type="ChEBI" id="CHEBI:58210"/>
        <dbReference type="EC" id="1.14.14.139"/>
    </reaction>
    <physiologicalReaction direction="left-to-right" evidence="8">
        <dbReference type="Rhea" id="RHEA:65701"/>
    </physiologicalReaction>
</comment>
<comment type="cofactor">
    <cofactor evidence="2">
        <name>heme</name>
        <dbReference type="ChEBI" id="CHEBI:30413"/>
    </cofactor>
</comment>
<comment type="pathway">
    <text evidence="3">Lipid metabolism; bile acid biosynthesis.</text>
</comment>
<comment type="subcellular location">
    <subcellularLocation>
        <location evidence="2">Endoplasmic reticulum membrane</location>
        <topology evidence="5">Single-pass membrane protein</topology>
    </subcellularLocation>
    <subcellularLocation>
        <location evidence="2">Microsome membrane</location>
        <topology evidence="5">Single-pass membrane protein</topology>
    </subcellularLocation>
</comment>
<comment type="developmental stage">
    <text evidence="6">Expressed in fetal liver, but absent in 4 days old and 6 weeks old unweaned pigs.</text>
</comment>
<comment type="similarity">
    <text evidence="7">Belongs to the cytochrome P450 family.</text>
</comment>
<dbReference type="EC" id="1.14.14.139" evidence="6"/>
<dbReference type="EMBL" id="AJ488932">
    <property type="protein sequence ID" value="CAD32936.1"/>
    <property type="molecule type" value="Genomic_DNA"/>
</dbReference>
<dbReference type="RefSeq" id="NP_999591.1">
    <property type="nucleotide sequence ID" value="NM_214426.1"/>
</dbReference>
<dbReference type="SMR" id="Q7YRB2"/>
<dbReference type="FunCoup" id="Q7YRB2">
    <property type="interactions" value="93"/>
</dbReference>
<dbReference type="STRING" id="9823.ENSSSCP00000040274"/>
<dbReference type="GeneID" id="403328"/>
<dbReference type="KEGG" id="ssc:403328"/>
<dbReference type="CTD" id="1582"/>
<dbReference type="InParanoid" id="Q7YRB2"/>
<dbReference type="OrthoDB" id="654211at2759"/>
<dbReference type="UniPathway" id="UPA00221"/>
<dbReference type="Proteomes" id="UP000008227">
    <property type="component" value="Unplaced"/>
</dbReference>
<dbReference type="Proteomes" id="UP000314985">
    <property type="component" value="Unplaced"/>
</dbReference>
<dbReference type="Proteomes" id="UP000694570">
    <property type="component" value="Unplaced"/>
</dbReference>
<dbReference type="Proteomes" id="UP000694571">
    <property type="component" value="Unplaced"/>
</dbReference>
<dbReference type="Proteomes" id="UP000694720">
    <property type="component" value="Unplaced"/>
</dbReference>
<dbReference type="Proteomes" id="UP000694722">
    <property type="component" value="Unplaced"/>
</dbReference>
<dbReference type="Proteomes" id="UP000694723">
    <property type="component" value="Unplaced"/>
</dbReference>
<dbReference type="Proteomes" id="UP000694724">
    <property type="component" value="Unplaced"/>
</dbReference>
<dbReference type="Proteomes" id="UP000694725">
    <property type="component" value="Unplaced"/>
</dbReference>
<dbReference type="Proteomes" id="UP000694726">
    <property type="component" value="Unplaced"/>
</dbReference>
<dbReference type="Proteomes" id="UP000694727">
    <property type="component" value="Unplaced"/>
</dbReference>
<dbReference type="Proteomes" id="UP000694728">
    <property type="component" value="Unplaced"/>
</dbReference>
<dbReference type="GO" id="GO:0005789">
    <property type="term" value="C:endoplasmic reticulum membrane"/>
    <property type="evidence" value="ECO:0000250"/>
    <property type="project" value="UniProtKB"/>
</dbReference>
<dbReference type="GO" id="GO:0020037">
    <property type="term" value="F:heme binding"/>
    <property type="evidence" value="ECO:0007669"/>
    <property type="project" value="InterPro"/>
</dbReference>
<dbReference type="GO" id="GO:0005506">
    <property type="term" value="F:iron ion binding"/>
    <property type="evidence" value="ECO:0007669"/>
    <property type="project" value="InterPro"/>
</dbReference>
<dbReference type="GO" id="GO:0008397">
    <property type="term" value="F:sterol 12-alpha-hydroxylase activity"/>
    <property type="evidence" value="ECO:0000314"/>
    <property type="project" value="UniProtKB"/>
</dbReference>
<dbReference type="GO" id="GO:0006699">
    <property type="term" value="P:bile acid biosynthetic process"/>
    <property type="evidence" value="ECO:0000314"/>
    <property type="project" value="UniProtKB"/>
</dbReference>
<dbReference type="GO" id="GO:0045797">
    <property type="term" value="P:positive regulation of intestinal cholesterol absorption"/>
    <property type="evidence" value="ECO:0000250"/>
    <property type="project" value="UniProtKB"/>
</dbReference>
<dbReference type="GO" id="GO:0006694">
    <property type="term" value="P:steroid biosynthetic process"/>
    <property type="evidence" value="ECO:0007669"/>
    <property type="project" value="UniProtKB-KW"/>
</dbReference>
<dbReference type="FunFam" id="1.10.630.10:FF:000025">
    <property type="entry name" value="Prostaglandin I2 (prostacyclin) synthase"/>
    <property type="match status" value="1"/>
</dbReference>
<dbReference type="Gene3D" id="1.10.630.10">
    <property type="entry name" value="Cytochrome P450"/>
    <property type="match status" value="1"/>
</dbReference>
<dbReference type="InterPro" id="IPR001128">
    <property type="entry name" value="Cyt_P450"/>
</dbReference>
<dbReference type="InterPro" id="IPR024204">
    <property type="entry name" value="Cyt_P450_CYP7A1-type"/>
</dbReference>
<dbReference type="InterPro" id="IPR002403">
    <property type="entry name" value="Cyt_P450_E_grp-IV"/>
</dbReference>
<dbReference type="InterPro" id="IPR036396">
    <property type="entry name" value="Cyt_P450_sf"/>
</dbReference>
<dbReference type="InterPro" id="IPR030686">
    <property type="entry name" value="Cytochrome_CYP8B1"/>
</dbReference>
<dbReference type="PANTHER" id="PTHR24306">
    <property type="match status" value="1"/>
</dbReference>
<dbReference type="PANTHER" id="PTHR24306:SF0">
    <property type="entry name" value="7-ALPHA-HYDROXYCHOLEST-4-EN-3-ONE 12-ALPHA-HYDROXYLASE"/>
    <property type="match status" value="1"/>
</dbReference>
<dbReference type="Pfam" id="PF00067">
    <property type="entry name" value="p450"/>
    <property type="match status" value="1"/>
</dbReference>
<dbReference type="PIRSF" id="PIRSF500627">
    <property type="entry name" value="Cytochrome_CYP8B1"/>
    <property type="match status" value="1"/>
</dbReference>
<dbReference type="PIRSF" id="PIRSF000047">
    <property type="entry name" value="Cytochrome_CYPVIIA1"/>
    <property type="match status" value="1"/>
</dbReference>
<dbReference type="PRINTS" id="PR00465">
    <property type="entry name" value="EP450IV"/>
</dbReference>
<dbReference type="SUPFAM" id="SSF48264">
    <property type="entry name" value="Cytochrome P450"/>
    <property type="match status" value="1"/>
</dbReference>
<feature type="chain" id="PRO_0000280745" description="5-beta-cholestane-3-alpha,7-alpha-diol 12-alpha-hydroxylase">
    <location>
        <begin position="1"/>
        <end position="501"/>
    </location>
</feature>
<feature type="transmembrane region" description="Helical" evidence="5">
    <location>
        <begin position="1"/>
        <end position="21"/>
    </location>
</feature>
<feature type="binding site" description="axial binding residue" evidence="1">
    <location>
        <position position="440"/>
    </location>
    <ligand>
        <name>heme</name>
        <dbReference type="ChEBI" id="CHEBI:30413"/>
    </ligand>
    <ligandPart>
        <name>Fe</name>
        <dbReference type="ChEBI" id="CHEBI:18248"/>
    </ligandPart>
</feature>
<feature type="modified residue" description="Phosphoserine" evidence="4">
    <location>
        <position position="326"/>
    </location>
</feature>
<gene>
    <name type="primary">CYP8B1</name>
</gene>
<protein>
    <recommendedName>
        <fullName>5-beta-cholestane-3-alpha,7-alpha-diol 12-alpha-hydroxylase</fullName>
        <ecNumber evidence="6">1.14.14.139</ecNumber>
    </recommendedName>
    <alternativeName>
        <fullName>CYPVIIIB1</fullName>
    </alternativeName>
    <alternativeName>
        <fullName>Cytochrome P450 8B1</fullName>
    </alternativeName>
    <alternativeName>
        <fullName>Sterol 12-alpha-hydroxylase</fullName>
    </alternativeName>
</protein>
<reference key="1">
    <citation type="journal article" date="2003" name="Biochim. Biophys. Acta">
        <title>Gene structure of pig sterol 12alpha-hydroxylase (CYP8B1) and expression in fetal liver: comparison with expression of taurochenodeoxycholic acid 6alpha-hydroxylase (CYP4A21).</title>
        <authorList>
            <person name="Lundell K."/>
            <person name="Wikvall K."/>
        </authorList>
    </citation>
    <scope>NUCLEOTIDE SEQUENCE [GENOMIC DNA]</scope>
    <scope>FUNCTION</scope>
    <scope>CATALYTIC ACTIVITY</scope>
    <scope>DEVELOPMENTAL STAGE</scope>
    <source>
        <tissue>Liver</tissue>
    </source>
</reference>
<proteinExistence type="evidence at protein level"/>